<organism>
    <name type="scientific">Escherichia coli (strain K12)</name>
    <dbReference type="NCBI Taxonomy" id="83333"/>
    <lineage>
        <taxon>Bacteria</taxon>
        <taxon>Pseudomonadati</taxon>
        <taxon>Pseudomonadota</taxon>
        <taxon>Gammaproteobacteria</taxon>
        <taxon>Enterobacterales</taxon>
        <taxon>Enterobacteriaceae</taxon>
        <taxon>Escherichia</taxon>
    </lineage>
</organism>
<keyword id="KW-0002">3D-structure</keyword>
<keyword id="KW-0963">Cytoplasm</keyword>
<keyword id="KW-1185">Reference proteome</keyword>
<proteinExistence type="evidence at protein level"/>
<dbReference type="EMBL" id="U56082">
    <property type="protein sequence ID" value="AAB01208.1"/>
    <property type="molecule type" value="Genomic_DNA"/>
</dbReference>
<dbReference type="EMBL" id="L19201">
    <property type="protein sequence ID" value="AAB03061.1"/>
    <property type="molecule type" value="Genomic_DNA"/>
</dbReference>
<dbReference type="EMBL" id="U00096">
    <property type="protein sequence ID" value="AAC76911.1"/>
    <property type="molecule type" value="Genomic_DNA"/>
</dbReference>
<dbReference type="EMBL" id="AP009048">
    <property type="protein sequence ID" value="BAE77381.1"/>
    <property type="molecule type" value="Genomic_DNA"/>
</dbReference>
<dbReference type="PIR" id="S40872">
    <property type="entry name" value="S40872"/>
</dbReference>
<dbReference type="RefSeq" id="NP_418364.1">
    <property type="nucleotide sequence ID" value="NC_000913.3"/>
</dbReference>
<dbReference type="RefSeq" id="WP_000872908.1">
    <property type="nucleotide sequence ID" value="NZ_STEB01000017.1"/>
</dbReference>
<dbReference type="PDB" id="1Q5X">
    <property type="method" value="X-ray"/>
    <property type="resolution" value="2.00 A"/>
    <property type="chains" value="A/B/C=1-161"/>
</dbReference>
<dbReference type="PDB" id="2YJT">
    <property type="method" value="X-ray"/>
    <property type="resolution" value="2.90 A"/>
    <property type="chains" value="A/B/C=1-161"/>
</dbReference>
<dbReference type="PDB" id="2YJV">
    <property type="method" value="X-ray"/>
    <property type="resolution" value="2.80 A"/>
    <property type="chains" value="A/B/C/D/E/F/G/H/I/J/K/L=1-161"/>
</dbReference>
<dbReference type="PDBsum" id="1Q5X"/>
<dbReference type="PDBsum" id="2YJT"/>
<dbReference type="PDBsum" id="2YJV"/>
<dbReference type="SMR" id="P0A8R0"/>
<dbReference type="BioGRID" id="4261785">
    <property type="interactions" value="37"/>
</dbReference>
<dbReference type="BioGRID" id="852716">
    <property type="interactions" value="3"/>
</dbReference>
<dbReference type="DIP" id="DIP-35864N"/>
<dbReference type="FunCoup" id="P0A8R0">
    <property type="interactions" value="82"/>
</dbReference>
<dbReference type="IntAct" id="P0A8R0">
    <property type="interactions" value="12"/>
</dbReference>
<dbReference type="STRING" id="511145.b3929"/>
<dbReference type="jPOST" id="P0A8R0"/>
<dbReference type="PaxDb" id="511145-b3929"/>
<dbReference type="EnsemblBacteria" id="AAC76911">
    <property type="protein sequence ID" value="AAC76911"/>
    <property type="gene ID" value="b3929"/>
</dbReference>
<dbReference type="GeneID" id="93777969"/>
<dbReference type="GeneID" id="948419"/>
<dbReference type="KEGG" id="ecj:JW3900"/>
<dbReference type="KEGG" id="eco:b3929"/>
<dbReference type="KEGG" id="ecoc:C3026_21235"/>
<dbReference type="PATRIC" id="fig|1411691.4.peg.2776"/>
<dbReference type="EchoBASE" id="EB1825"/>
<dbReference type="eggNOG" id="COG0684">
    <property type="taxonomic scope" value="Bacteria"/>
</dbReference>
<dbReference type="HOGENOM" id="CLU_072626_4_0_6"/>
<dbReference type="InParanoid" id="P0A8R0"/>
<dbReference type="OMA" id="RSCDTQF"/>
<dbReference type="OrthoDB" id="943692at2"/>
<dbReference type="PhylomeDB" id="P0A8R0"/>
<dbReference type="BioCyc" id="EcoCyc:EG11879-MONOMER"/>
<dbReference type="EvolutionaryTrace" id="P0A8R0"/>
<dbReference type="PRO" id="PR:P0A8R0"/>
<dbReference type="Proteomes" id="UP000000625">
    <property type="component" value="Chromosome"/>
</dbReference>
<dbReference type="GO" id="GO:0005829">
    <property type="term" value="C:cytosol"/>
    <property type="evidence" value="ECO:0000314"/>
    <property type="project" value="EcoCyc"/>
</dbReference>
<dbReference type="GO" id="GO:0032991">
    <property type="term" value="C:protein-containing complex"/>
    <property type="evidence" value="ECO:0000314"/>
    <property type="project" value="EcoCyc"/>
</dbReference>
<dbReference type="GO" id="GO:0060698">
    <property type="term" value="F:endoribonuclease inhibitor activity"/>
    <property type="evidence" value="ECO:0007669"/>
    <property type="project" value="UniProtKB-UniRule"/>
</dbReference>
<dbReference type="GO" id="GO:0019899">
    <property type="term" value="F:enzyme binding"/>
    <property type="evidence" value="ECO:0000353"/>
    <property type="project" value="EcoCyc"/>
</dbReference>
<dbReference type="GO" id="GO:0042802">
    <property type="term" value="F:identical protein binding"/>
    <property type="evidence" value="ECO:0000314"/>
    <property type="project" value="EcoCyc"/>
</dbReference>
<dbReference type="GO" id="GO:0008428">
    <property type="term" value="F:ribonuclease inhibitor activity"/>
    <property type="evidence" value="ECO:0000314"/>
    <property type="project" value="EcoCyc"/>
</dbReference>
<dbReference type="GO" id="GO:1902369">
    <property type="term" value="P:negative regulation of RNA catabolic process"/>
    <property type="evidence" value="ECO:0000314"/>
    <property type="project" value="EcoCyc"/>
</dbReference>
<dbReference type="GO" id="GO:0070207">
    <property type="term" value="P:protein homotrimerization"/>
    <property type="evidence" value="ECO:0000314"/>
    <property type="project" value="EcoCyc"/>
</dbReference>
<dbReference type="CDD" id="cd16841">
    <property type="entry name" value="RraA_family"/>
    <property type="match status" value="1"/>
</dbReference>
<dbReference type="FunFam" id="3.50.30.40:FF:000001">
    <property type="entry name" value="Regulator of ribonuclease activity A"/>
    <property type="match status" value="1"/>
</dbReference>
<dbReference type="Gene3D" id="3.50.30.40">
    <property type="entry name" value="Ribonuclease E inhibitor RraA/RraA-like"/>
    <property type="match status" value="1"/>
</dbReference>
<dbReference type="HAMAP" id="MF_00471">
    <property type="entry name" value="RraA"/>
    <property type="match status" value="1"/>
</dbReference>
<dbReference type="InterPro" id="IPR010203">
    <property type="entry name" value="RraA"/>
</dbReference>
<dbReference type="InterPro" id="IPR005493">
    <property type="entry name" value="RraA/RraA-like"/>
</dbReference>
<dbReference type="InterPro" id="IPR036704">
    <property type="entry name" value="RraA/RraA-like_sf"/>
</dbReference>
<dbReference type="InterPro" id="IPR014339">
    <property type="entry name" value="RraA_gpbac"/>
</dbReference>
<dbReference type="NCBIfam" id="TIGR01935">
    <property type="entry name" value="NOT-MenG"/>
    <property type="match status" value="1"/>
</dbReference>
<dbReference type="NCBIfam" id="NF006875">
    <property type="entry name" value="PRK09372.1"/>
    <property type="match status" value="1"/>
</dbReference>
<dbReference type="NCBIfam" id="TIGR02998">
    <property type="entry name" value="RraA_entero"/>
    <property type="match status" value="1"/>
</dbReference>
<dbReference type="PANTHER" id="PTHR33254">
    <property type="entry name" value="4-HYDROXY-4-METHYL-2-OXOGLUTARATE ALDOLASE 3-RELATED"/>
    <property type="match status" value="1"/>
</dbReference>
<dbReference type="PANTHER" id="PTHR33254:SF29">
    <property type="entry name" value="REGULATOR OF RIBONUCLEASE ACTIVITY A"/>
    <property type="match status" value="1"/>
</dbReference>
<dbReference type="Pfam" id="PF03737">
    <property type="entry name" value="RraA-like"/>
    <property type="match status" value="1"/>
</dbReference>
<dbReference type="SUPFAM" id="SSF89562">
    <property type="entry name" value="RraA-like"/>
    <property type="match status" value="1"/>
</dbReference>
<feature type="chain" id="PRO_0000209611" description="Regulator of ribonuclease activity A">
    <location>
        <begin position="1"/>
        <end position="161"/>
    </location>
</feature>
<feature type="helix" evidence="9">
    <location>
        <begin position="5"/>
        <end position="12"/>
    </location>
</feature>
<feature type="helix" evidence="9">
    <location>
        <begin position="13"/>
        <end position="15"/>
    </location>
</feature>
<feature type="strand" evidence="9">
    <location>
        <begin position="16"/>
        <end position="18"/>
    </location>
</feature>
<feature type="strand" evidence="9">
    <location>
        <begin position="30"/>
        <end position="40"/>
    </location>
</feature>
<feature type="strand" evidence="9">
    <location>
        <begin position="42"/>
        <end position="44"/>
    </location>
</feature>
<feature type="helix" evidence="9">
    <location>
        <begin position="46"/>
        <end position="52"/>
    </location>
</feature>
<feature type="strand" evidence="9">
    <location>
        <begin position="59"/>
        <end position="64"/>
    </location>
</feature>
<feature type="strand" evidence="9">
    <location>
        <begin position="69"/>
        <end position="74"/>
    </location>
</feature>
<feature type="helix" evidence="9">
    <location>
        <begin position="76"/>
        <end position="84"/>
    </location>
</feature>
<feature type="strand" evidence="9">
    <location>
        <begin position="89"/>
        <end position="96"/>
    </location>
</feature>
<feature type="helix" evidence="9">
    <location>
        <begin position="99"/>
        <end position="102"/>
    </location>
</feature>
<feature type="strand" evidence="9">
    <location>
        <begin position="105"/>
        <end position="114"/>
    </location>
</feature>
<feature type="strand" evidence="9">
    <location>
        <begin position="116"/>
        <end position="118"/>
    </location>
</feature>
<feature type="strand" evidence="9">
    <location>
        <begin position="125"/>
        <end position="128"/>
    </location>
</feature>
<feature type="strand" evidence="9">
    <location>
        <begin position="131"/>
        <end position="133"/>
    </location>
</feature>
<feature type="strand" evidence="9">
    <location>
        <begin position="136"/>
        <end position="138"/>
    </location>
</feature>
<feature type="strand" evidence="9">
    <location>
        <begin position="143"/>
        <end position="146"/>
    </location>
</feature>
<feature type="strand" evidence="9">
    <location>
        <begin position="151"/>
        <end position="156"/>
    </location>
</feature>
<reference key="1">
    <citation type="submission" date="1996-04" db="EMBL/GenBank/DDBJ databases">
        <authorList>
            <person name="Hudspeth M.E.S."/>
            <person name="Suvarna K."/>
            <person name="Meganathan R."/>
        </authorList>
    </citation>
    <scope>NUCLEOTIDE SEQUENCE [GENOMIC DNA]</scope>
    <source>
        <strain>K12</strain>
    </source>
</reference>
<reference key="2">
    <citation type="journal article" date="1993" name="Nucleic Acids Res.">
        <title>Analysis of the Escherichia coli genome. III. DNA sequence of the region from 87.2 to 89.2 minutes.</title>
        <authorList>
            <person name="Plunkett G. III"/>
            <person name="Burland V."/>
            <person name="Daniels D.L."/>
            <person name="Blattner F.R."/>
        </authorList>
    </citation>
    <scope>NUCLEOTIDE SEQUENCE [LARGE SCALE GENOMIC DNA]</scope>
    <source>
        <strain>K12 / MG1655 / ATCC 47076</strain>
    </source>
</reference>
<reference key="3">
    <citation type="journal article" date="1997" name="Science">
        <title>The complete genome sequence of Escherichia coli K-12.</title>
        <authorList>
            <person name="Blattner F.R."/>
            <person name="Plunkett G. III"/>
            <person name="Bloch C.A."/>
            <person name="Perna N.T."/>
            <person name="Burland V."/>
            <person name="Riley M."/>
            <person name="Collado-Vides J."/>
            <person name="Glasner J.D."/>
            <person name="Rode C.K."/>
            <person name="Mayhew G.F."/>
            <person name="Gregor J."/>
            <person name="Davis N.W."/>
            <person name="Kirkpatrick H.A."/>
            <person name="Goeden M.A."/>
            <person name="Rose D.J."/>
            <person name="Mau B."/>
            <person name="Shao Y."/>
        </authorList>
    </citation>
    <scope>NUCLEOTIDE SEQUENCE [LARGE SCALE GENOMIC DNA]</scope>
    <source>
        <strain>K12 / MG1655 / ATCC 47076</strain>
    </source>
</reference>
<reference key="4">
    <citation type="journal article" date="2006" name="Mol. Syst. Biol.">
        <title>Highly accurate genome sequences of Escherichia coli K-12 strains MG1655 and W3110.</title>
        <authorList>
            <person name="Hayashi K."/>
            <person name="Morooka N."/>
            <person name="Yamamoto Y."/>
            <person name="Fujita K."/>
            <person name="Isono K."/>
            <person name="Choi S."/>
            <person name="Ohtsubo E."/>
            <person name="Baba T."/>
            <person name="Wanner B.L."/>
            <person name="Mori H."/>
            <person name="Horiuchi T."/>
        </authorList>
    </citation>
    <scope>NUCLEOTIDE SEQUENCE [LARGE SCALE GENOMIC DNA]</scope>
    <source>
        <strain>K12 / W3110 / ATCC 27325 / DSM 5911</strain>
    </source>
</reference>
<reference key="5">
    <citation type="journal article" date="2003" name="Cell">
        <title>RraA. a protein inhibitor of RNase E activity that globally modulates RNA abundance in E. coli.</title>
        <authorList>
            <person name="Lee K."/>
            <person name="Zhan X."/>
            <person name="Gao J."/>
            <person name="Qiu J."/>
            <person name="Feng Y."/>
            <person name="Meganathan R."/>
            <person name="Cohen S.N."/>
            <person name="Georgiou G."/>
        </authorList>
    </citation>
    <scope>FUNCTION</scope>
    <scope>INTERACTION WITH RNE</scope>
</reference>
<reference key="6">
    <citation type="journal article" date="2006" name="Biochem. Biophys. Res. Commun.">
        <title>RraA rescues Escherichia coli cells over-producing RNase E from growth arrest by modulating the ribonucleolytic activity.</title>
        <authorList>
            <person name="Yeom J.H."/>
            <person name="Lee K."/>
        </authorList>
    </citation>
    <scope>FUNCTION</scope>
</reference>
<reference key="7">
    <citation type="journal article" date="2006" name="J. Bacteriol.">
        <title>Regulation of RraA, a protein inhibitor of RNase E-mediated RNA decay.</title>
        <authorList>
            <person name="Zhao M."/>
            <person name="Zhou L."/>
            <person name="Kawarasaki Y."/>
            <person name="Georgiou G."/>
        </authorList>
    </citation>
    <scope>INDUCTION</scope>
    <source>
        <strain>K12</strain>
    </source>
</reference>
<reference key="8">
    <citation type="journal article" date="2006" name="Mol. Microbiol.">
        <title>Differential modulation of E. coli mRNA abundance by inhibitory proteins that alter the composition of the degradosome.</title>
        <authorList>
            <person name="Gao J."/>
            <person name="Lee K."/>
            <person name="Zhao M."/>
            <person name="Qiu J."/>
            <person name="Zhan X."/>
            <person name="Saxena A."/>
            <person name="Moore C.J."/>
            <person name="Cohen S.N."/>
            <person name="Georgiou G."/>
        </authorList>
    </citation>
    <scope>FUNCTION</scope>
    <scope>INTERACTION WITH RNE</scope>
    <source>
        <strain>K12</strain>
    </source>
</reference>
<reference key="9">
    <citation type="journal article" date="2008" name="FEMS Microbiol. Lett.">
        <title>Inhibitory effects of RraA and RraB on RNAse E-related enzymes imply conserved functions in the regulated enzymatic cleavage of RNA.</title>
        <authorList>
            <person name="Yeom J.H."/>
            <person name="Go H."/>
            <person name="Shin E."/>
            <person name="Kim H.L."/>
            <person name="Han S.H."/>
            <person name="Moore C.J."/>
            <person name="Bae J."/>
            <person name="Lee K."/>
        </authorList>
    </citation>
    <scope>FUNCTION</scope>
</reference>
<reference key="10">
    <citation type="journal article" date="2010" name="RNA">
        <title>The regulatory protein RraA modulates RNA-binding and helicase activities of the E. coli RNA degradosome.</title>
        <authorList>
            <person name="Gorna M.W."/>
            <person name="Pietras Z."/>
            <person name="Tsai Y.C."/>
            <person name="Callaghan A.J."/>
            <person name="Hernandez H."/>
            <person name="Robinson C.V."/>
            <person name="Luisi B.F."/>
        </authorList>
    </citation>
    <scope>FUNCTION</scope>
    <scope>INTERACTION WITH RNE AND RHLB</scope>
</reference>
<reference key="11">
    <citation type="journal article" date="2003" name="J. Mol. Biol.">
        <title>The X-ray structure of Escherichia coli RraA (MenG), A protein inhibitor of RNA processing.</title>
        <authorList>
            <person name="Monzingo A.F."/>
            <person name="Gao J."/>
            <person name="Qiu J."/>
            <person name="Georgiou G."/>
            <person name="Robertus J.D."/>
        </authorList>
    </citation>
    <scope>X-RAY CRYSTALLOGRAPHY (2.0 ANGSTROMS)</scope>
    <scope>SUBUNIT</scope>
</reference>
<accession>P0A8R0</accession>
<accession>P32165</accession>
<accession>Q2M8M5</accession>
<name>RRAA_ECOLI</name>
<comment type="function">
    <text evidence="1 4 5 6 7">Globally modulates RNA abundance by binding to RNase E (Rne) and regulating its endonucleolytic activity. Can modulate Rne action in a substrate-dependent manner by altering the composition of the degradosome. Modulates RNA-binding and helicase activities of the degradosome.</text>
</comment>
<comment type="subunit">
    <text evidence="2">Homotrimer. Forms a ring-like structure with a central cavity. Binds to both RNA-binding sites in the C-terminal region of Rne and to RhlB.</text>
</comment>
<comment type="subcellular location">
    <subcellularLocation>
        <location evidence="8">Cytoplasm</location>
    </subcellularLocation>
</comment>
<comment type="induction">
    <text evidence="3">Induced upon entry into stationary phase, in a RpoS-dependent manner. Stability of the rraA transcript is Rne dependent, suggesting the existence of a feedback mechanism in the regulation of RraA level.</text>
</comment>
<comment type="miscellaneous">
    <text>RraA and RraB interact with Rne at separate sites within the Rne and exert distinct effects on the composition of the degradosome, affecting distinct sets of RNA transcripts.</text>
</comment>
<comment type="similarity">
    <text evidence="8">Belongs to the RraA family.</text>
</comment>
<comment type="caution">
    <text evidence="8">Although it was initially thought to be a methyltransferase of the menaquinone pathway, PubMed:13678585 showed that it has no SAM-dependent methyltransferase activity and is not involved in the menaquinone pathway.</text>
</comment>
<protein>
    <recommendedName>
        <fullName>Regulator of ribonuclease activity A</fullName>
    </recommendedName>
</protein>
<gene>
    <name type="primary">rraA</name>
    <name type="synonym">menG</name>
    <name type="synonym">yiiV</name>
    <name type="ordered locus">b3929</name>
    <name type="ordered locus">JW3900</name>
</gene>
<evidence type="ECO:0000269" key="1">
    <source>
    </source>
</evidence>
<evidence type="ECO:0000269" key="2">
    <source>
    </source>
</evidence>
<evidence type="ECO:0000269" key="3">
    <source>
    </source>
</evidence>
<evidence type="ECO:0000269" key="4">
    <source>
    </source>
</evidence>
<evidence type="ECO:0000269" key="5">
    <source>
    </source>
</evidence>
<evidence type="ECO:0000269" key="6">
    <source>
    </source>
</evidence>
<evidence type="ECO:0000269" key="7">
    <source>
    </source>
</evidence>
<evidence type="ECO:0000305" key="8"/>
<evidence type="ECO:0007829" key="9">
    <source>
        <dbReference type="PDB" id="1Q5X"/>
    </source>
</evidence>
<sequence length="161" mass="17360">MKYDTSELCDIYQEDVNVVEPLFSNFGGRASFGGQIITVKCFEDNGLLYDLLEQNGRGRVLVVDGGGSVRRALVDAELARLAVQNEWEGLVIYGAVRQVDDLEELDIGIQAMAAIPVGAAGEGIGESDVRVNFGGVTFFSGDHLYADNTGIILSEDPLDIE</sequence>